<sequence length="315" mass="36201">MAATAVGNDVIDRDLPTAVRLLNSLTEQIVSVTSHVRELIKKVREKAYQTSKGLSFLDLRYHLLLFYLQDITHLISLKTEGESLKDNSAIHRLVTIRTVLEKMRPLDQKLKYQIDKLVRTAVTGSLSENDPLHFRPNPQSLVSKLSESEDSDDDGVGGKTKEQKEPSGGRRYVPPRIAPMHYDGDLTEADRQKERVEKQKRAALRSSVIQELRQQYSDAPEEIRDRRDFQTDRQGREELNRKNYEESMMVRLSTTRDQKLRKRGMMGMTSQLSNITRFSDITALTGGEVQDIGNPKPKKKKIIKKGKKKVFRKRK</sequence>
<name>NGDN_DANRE</name>
<proteinExistence type="evidence at transcript level"/>
<accession>Q6PFJ1</accession>
<protein>
    <recommendedName>
        <fullName>Neuroguidin</fullName>
    </recommendedName>
    <alternativeName>
        <fullName>EIF4E-binding protein</fullName>
    </alternativeName>
</protein>
<comment type="function">
    <text evidence="1 2">Part of the small subunit (SSU) processome, first precursor of the small eukaryotic ribosomal subunit. During the assembly of the SSU processome in the nucleolus, many ribosome biogenesis factors, an RNA chaperone and ribosomal proteins associate with the nascent pre-rRNA and work in concert to generate RNA folding, modifications, rearrangements and cleavage as well as targeted degradation of pre-ribosomal RNA by the RNA exosome. Its dissociation from the complex determines the transition from state pre-A1 to state pre-A1* (By similarity). May inhibit mRNA translation (By similarity).</text>
</comment>
<comment type="subunit">
    <text evidence="1">Part of the small subunit (SSU) processome, composed of more than 70 proteins and the RNA chaperone small nucleolar RNA (snoRNA) U3.</text>
</comment>
<comment type="subcellular location">
    <subcellularLocation>
        <location evidence="2">Nucleus</location>
    </subcellularLocation>
    <subcellularLocation>
        <location evidence="1">Nucleus</location>
        <location evidence="1">Nucleolus</location>
    </subcellularLocation>
    <subcellularLocation>
        <location evidence="1">Chromosome</location>
        <location evidence="1">Centromere</location>
    </subcellularLocation>
    <subcellularLocation>
        <location evidence="2">Cytoplasm</location>
    </subcellularLocation>
    <subcellularLocation>
        <location evidence="2">Cell projection</location>
        <location evidence="2">Axon</location>
    </subcellularLocation>
    <subcellularLocation>
        <location evidence="2">Cell projection</location>
        <location evidence="2">Dendrite</location>
    </subcellularLocation>
    <subcellularLocation>
        <location evidence="2">Cell projection</location>
        <location evidence="2">Filopodium</location>
    </subcellularLocation>
</comment>
<comment type="similarity">
    <text evidence="5">Belongs to the SAS10 family.</text>
</comment>
<keyword id="KW-0966">Cell projection</keyword>
<keyword id="KW-0137">Centromere</keyword>
<keyword id="KW-0158">Chromosome</keyword>
<keyword id="KW-0175">Coiled coil</keyword>
<keyword id="KW-0963">Cytoplasm</keyword>
<keyword id="KW-0539">Nucleus</keyword>
<keyword id="KW-1185">Reference proteome</keyword>
<keyword id="KW-0678">Repressor</keyword>
<keyword id="KW-0810">Translation regulation</keyword>
<dbReference type="EMBL" id="BC057531">
    <property type="protein sequence ID" value="AAH57531.1"/>
    <property type="molecule type" value="mRNA"/>
</dbReference>
<dbReference type="RefSeq" id="NP_938187.2">
    <property type="nucleotide sequence ID" value="NM_198373.2"/>
</dbReference>
<dbReference type="SMR" id="Q6PFJ1"/>
<dbReference type="FunCoup" id="Q6PFJ1">
    <property type="interactions" value="2658"/>
</dbReference>
<dbReference type="STRING" id="7955.ENSDARP00000066720"/>
<dbReference type="PaxDb" id="7955-ENSDARP00000066720"/>
<dbReference type="GeneID" id="386642"/>
<dbReference type="KEGG" id="dre:386642"/>
<dbReference type="AGR" id="ZFIN:ZDB-GENE-031030-13"/>
<dbReference type="CTD" id="25983"/>
<dbReference type="ZFIN" id="ZDB-GENE-031030-13">
    <property type="gene designation" value="ngdn"/>
</dbReference>
<dbReference type="eggNOG" id="KOG3117">
    <property type="taxonomic scope" value="Eukaryota"/>
</dbReference>
<dbReference type="InParanoid" id="Q6PFJ1"/>
<dbReference type="OrthoDB" id="203440at2759"/>
<dbReference type="PhylomeDB" id="Q6PFJ1"/>
<dbReference type="PRO" id="PR:Q6PFJ1"/>
<dbReference type="Proteomes" id="UP000000437">
    <property type="component" value="Chromosome 24"/>
</dbReference>
<dbReference type="GO" id="GO:0030424">
    <property type="term" value="C:axon"/>
    <property type="evidence" value="ECO:0007669"/>
    <property type="project" value="UniProtKB-SubCell"/>
</dbReference>
<dbReference type="GO" id="GO:0000775">
    <property type="term" value="C:chromosome, centromeric region"/>
    <property type="evidence" value="ECO:0007669"/>
    <property type="project" value="UniProtKB-SubCell"/>
</dbReference>
<dbReference type="GO" id="GO:0005737">
    <property type="term" value="C:cytoplasm"/>
    <property type="evidence" value="ECO:0007669"/>
    <property type="project" value="UniProtKB-SubCell"/>
</dbReference>
<dbReference type="GO" id="GO:0030425">
    <property type="term" value="C:dendrite"/>
    <property type="evidence" value="ECO:0007669"/>
    <property type="project" value="UniProtKB-SubCell"/>
</dbReference>
<dbReference type="GO" id="GO:0030175">
    <property type="term" value="C:filopodium"/>
    <property type="evidence" value="ECO:0007669"/>
    <property type="project" value="UniProtKB-SubCell"/>
</dbReference>
<dbReference type="GO" id="GO:0005730">
    <property type="term" value="C:nucleolus"/>
    <property type="evidence" value="ECO:0000318"/>
    <property type="project" value="GO_Central"/>
</dbReference>
<dbReference type="GO" id="GO:0032040">
    <property type="term" value="C:small-subunit processome"/>
    <property type="evidence" value="ECO:0000250"/>
    <property type="project" value="UniProtKB"/>
</dbReference>
<dbReference type="GO" id="GO:0000462">
    <property type="term" value="P:maturation of SSU-rRNA from tricistronic rRNA transcript (SSU-rRNA, 5.8S rRNA, LSU-rRNA)"/>
    <property type="evidence" value="ECO:0000318"/>
    <property type="project" value="GO_Central"/>
</dbReference>
<dbReference type="GO" id="GO:0006417">
    <property type="term" value="P:regulation of translation"/>
    <property type="evidence" value="ECO:0007669"/>
    <property type="project" value="UniProtKB-KW"/>
</dbReference>
<dbReference type="GO" id="GO:0042274">
    <property type="term" value="P:ribosomal small subunit biogenesis"/>
    <property type="evidence" value="ECO:0000250"/>
    <property type="project" value="UniProtKB"/>
</dbReference>
<dbReference type="InterPro" id="IPR007146">
    <property type="entry name" value="Sas10/Utp3/C1D"/>
</dbReference>
<dbReference type="PANTHER" id="PTHR13237:SF9">
    <property type="entry name" value="NEUROGUIDIN"/>
    <property type="match status" value="1"/>
</dbReference>
<dbReference type="PANTHER" id="PTHR13237">
    <property type="entry name" value="SOMETHING ABOUT SILENCING PROTEIN 10-RELATED"/>
    <property type="match status" value="1"/>
</dbReference>
<dbReference type="Pfam" id="PF04000">
    <property type="entry name" value="Sas10_Utp3"/>
    <property type="match status" value="1"/>
</dbReference>
<evidence type="ECO:0000250" key="1">
    <source>
        <dbReference type="UniProtKB" id="Q8NEJ9"/>
    </source>
</evidence>
<evidence type="ECO:0000250" key="2">
    <source>
        <dbReference type="UniProtKB" id="Q9DB96"/>
    </source>
</evidence>
<evidence type="ECO:0000255" key="3"/>
<evidence type="ECO:0000256" key="4">
    <source>
        <dbReference type="SAM" id="MobiDB-lite"/>
    </source>
</evidence>
<evidence type="ECO:0000305" key="5"/>
<reference key="1">
    <citation type="submission" date="2003-09" db="EMBL/GenBank/DDBJ databases">
        <authorList>
            <consortium name="NIH - Zebrafish Gene Collection (ZGC) project"/>
        </authorList>
    </citation>
    <scope>NUCLEOTIDE SEQUENCE [LARGE SCALE MRNA]</scope>
    <source>
        <strain>SJD</strain>
    </source>
</reference>
<gene>
    <name type="primary">ngdn</name>
    <name type="ORF">zgc:66416</name>
</gene>
<organism>
    <name type="scientific">Danio rerio</name>
    <name type="common">Zebrafish</name>
    <name type="synonym">Brachydanio rerio</name>
    <dbReference type="NCBI Taxonomy" id="7955"/>
    <lineage>
        <taxon>Eukaryota</taxon>
        <taxon>Metazoa</taxon>
        <taxon>Chordata</taxon>
        <taxon>Craniata</taxon>
        <taxon>Vertebrata</taxon>
        <taxon>Euteleostomi</taxon>
        <taxon>Actinopterygii</taxon>
        <taxon>Neopterygii</taxon>
        <taxon>Teleostei</taxon>
        <taxon>Ostariophysi</taxon>
        <taxon>Cypriniformes</taxon>
        <taxon>Danionidae</taxon>
        <taxon>Danioninae</taxon>
        <taxon>Danio</taxon>
    </lineage>
</organism>
<feature type="chain" id="PRO_0000269247" description="Neuroguidin">
    <location>
        <begin position="1"/>
        <end position="315"/>
    </location>
</feature>
<feature type="region of interest" description="Disordered" evidence="4">
    <location>
        <begin position="127"/>
        <end position="201"/>
    </location>
</feature>
<feature type="region of interest" description="Disordered" evidence="4">
    <location>
        <begin position="289"/>
        <end position="315"/>
    </location>
</feature>
<feature type="coiled-coil region" evidence="3">
    <location>
        <begin position="181"/>
        <end position="206"/>
    </location>
</feature>
<feature type="compositionally biased region" description="Basic and acidic residues" evidence="4">
    <location>
        <begin position="159"/>
        <end position="168"/>
    </location>
</feature>
<feature type="compositionally biased region" description="Basic and acidic residues" evidence="4">
    <location>
        <begin position="182"/>
        <end position="200"/>
    </location>
</feature>
<feature type="compositionally biased region" description="Basic residues" evidence="4">
    <location>
        <begin position="296"/>
        <end position="315"/>
    </location>
</feature>